<reference key="1">
    <citation type="journal article" date="1997" name="Nature">
        <title>The complete genome sequence of the hyperthermophilic, sulphate-reducing archaeon Archaeoglobus fulgidus.</title>
        <authorList>
            <person name="Klenk H.-P."/>
            <person name="Clayton R.A."/>
            <person name="Tomb J.-F."/>
            <person name="White O."/>
            <person name="Nelson K.E."/>
            <person name="Ketchum K.A."/>
            <person name="Dodson R.J."/>
            <person name="Gwinn M.L."/>
            <person name="Hickey E.K."/>
            <person name="Peterson J.D."/>
            <person name="Richardson D.L."/>
            <person name="Kerlavage A.R."/>
            <person name="Graham D.E."/>
            <person name="Kyrpides N.C."/>
            <person name="Fleischmann R.D."/>
            <person name="Quackenbush J."/>
            <person name="Lee N.H."/>
            <person name="Sutton G.G."/>
            <person name="Gill S.R."/>
            <person name="Kirkness E.F."/>
            <person name="Dougherty B.A."/>
            <person name="McKenney K."/>
            <person name="Adams M.D."/>
            <person name="Loftus B.J."/>
            <person name="Peterson S.N."/>
            <person name="Reich C.I."/>
            <person name="McNeil L.K."/>
            <person name="Badger J.H."/>
            <person name="Glodek A."/>
            <person name="Zhou L."/>
            <person name="Overbeek R."/>
            <person name="Gocayne J.D."/>
            <person name="Weidman J.F."/>
            <person name="McDonald L.A."/>
            <person name="Utterback T.R."/>
            <person name="Cotton M.D."/>
            <person name="Spriggs T."/>
            <person name="Artiach P."/>
            <person name="Kaine B.P."/>
            <person name="Sykes S.M."/>
            <person name="Sadow P.W."/>
            <person name="D'Andrea K.P."/>
            <person name="Bowman C."/>
            <person name="Fujii C."/>
            <person name="Garland S.A."/>
            <person name="Mason T.M."/>
            <person name="Olsen G.J."/>
            <person name="Fraser C.M."/>
            <person name="Smith H.O."/>
            <person name="Woese C.R."/>
            <person name="Venter J.C."/>
        </authorList>
    </citation>
    <scope>NUCLEOTIDE SEQUENCE [LARGE SCALE GENOMIC DNA]</scope>
    <source>
        <strain>ATCC 49558 / DSM 4304 / JCM 9628 / NBRC 100126 / VC-16</strain>
    </source>
</reference>
<dbReference type="EMBL" id="AE000782">
    <property type="protein sequence ID" value="AAB88947.1"/>
    <property type="molecule type" value="Genomic_DNA"/>
</dbReference>
<dbReference type="PIR" id="F69538">
    <property type="entry name" value="F69538"/>
</dbReference>
<dbReference type="RefSeq" id="WP_010879799.1">
    <property type="nucleotide sequence ID" value="NC_000917.1"/>
</dbReference>
<dbReference type="SMR" id="O27974"/>
<dbReference type="STRING" id="224325.AF_2310"/>
<dbReference type="PaxDb" id="224325-AF_2310"/>
<dbReference type="EnsemblBacteria" id="AAB88947">
    <property type="protein sequence ID" value="AAB88947"/>
    <property type="gene ID" value="AF_2310"/>
</dbReference>
<dbReference type="GeneID" id="1485542"/>
<dbReference type="KEGG" id="afu:AF_2310"/>
<dbReference type="eggNOG" id="arCOG01728">
    <property type="taxonomic scope" value="Archaea"/>
</dbReference>
<dbReference type="HOGENOM" id="CLU_038085_2_0_2"/>
<dbReference type="OrthoDB" id="372162at2157"/>
<dbReference type="PhylomeDB" id="O27974"/>
<dbReference type="Proteomes" id="UP000002199">
    <property type="component" value="Chromosome"/>
</dbReference>
<dbReference type="CDD" id="cd07361">
    <property type="entry name" value="MEMO_like"/>
    <property type="match status" value="1"/>
</dbReference>
<dbReference type="Gene3D" id="3.40.830.10">
    <property type="entry name" value="LigB-like"/>
    <property type="match status" value="1"/>
</dbReference>
<dbReference type="HAMAP" id="MF_00055">
    <property type="entry name" value="MEMO1"/>
    <property type="match status" value="1"/>
</dbReference>
<dbReference type="InterPro" id="IPR002737">
    <property type="entry name" value="MEMO1_fam"/>
</dbReference>
<dbReference type="NCBIfam" id="TIGR04336">
    <property type="entry name" value="AmmeMemoSam_B"/>
    <property type="match status" value="1"/>
</dbReference>
<dbReference type="NCBIfam" id="NF001987">
    <property type="entry name" value="PRK00782.1"/>
    <property type="match status" value="1"/>
</dbReference>
<dbReference type="PANTHER" id="PTHR11060">
    <property type="entry name" value="PROTEIN MEMO1"/>
    <property type="match status" value="1"/>
</dbReference>
<dbReference type="PANTHER" id="PTHR11060:SF0">
    <property type="entry name" value="PROTEIN MEMO1"/>
    <property type="match status" value="1"/>
</dbReference>
<dbReference type="Pfam" id="PF01875">
    <property type="entry name" value="Memo"/>
    <property type="match status" value="1"/>
</dbReference>
<dbReference type="SUPFAM" id="SSF53213">
    <property type="entry name" value="LigB-like"/>
    <property type="match status" value="1"/>
</dbReference>
<proteinExistence type="inferred from homology"/>
<keyword id="KW-1185">Reference proteome</keyword>
<organism>
    <name type="scientific">Archaeoglobus fulgidus (strain ATCC 49558 / DSM 4304 / JCM 9628 / NBRC 100126 / VC-16)</name>
    <dbReference type="NCBI Taxonomy" id="224325"/>
    <lineage>
        <taxon>Archaea</taxon>
        <taxon>Methanobacteriati</taxon>
        <taxon>Methanobacteriota</taxon>
        <taxon>Archaeoglobi</taxon>
        <taxon>Archaeoglobales</taxon>
        <taxon>Archaeoglobaceae</taxon>
        <taxon>Archaeoglobus</taxon>
    </lineage>
</organism>
<evidence type="ECO:0000255" key="1">
    <source>
        <dbReference type="HAMAP-Rule" id="MF_00055"/>
    </source>
</evidence>
<name>Y2310_ARCFU</name>
<gene>
    <name type="ordered locus">AF_2310</name>
</gene>
<protein>
    <recommendedName>
        <fullName evidence="1">MEMO1 family protein AF_2310</fullName>
    </recommendedName>
</protein>
<sequence>MRHPRVAGSFYPANPESLLAMLREYTYPAKDESVIACVSPHAGYVYSGRTAGKVHSLLPDAETFVIVGPNHTGYGLPVAVSTDTWLTPLGEVEVDTEFVEAMPKIITAPDEIAHRYEHSLEVQVPFLQYLHDDFKIVPICLGMQDEETAMEVAEEILTAERETGRKVVVIASSDMHHYLPDEECRRLDSIVIDAILSMDVKKYYETIYRLQASVCGYGCIAVAMYYSKAKGARAELVDYSTSGDVADRSQVVGYAGIVFRV</sequence>
<feature type="chain" id="PRO_0000134377" description="MEMO1 family protein AF_2310">
    <location>
        <begin position="1"/>
        <end position="261"/>
    </location>
</feature>
<accession>O27974</accession>
<comment type="similarity">
    <text evidence="1">Belongs to the MEMO1 family.</text>
</comment>